<comment type="function">
    <text evidence="1">Catalyzes the first step in hexosamine metabolism, converting fructose-6P into glucosamine-6P using glutamine as a nitrogen source.</text>
</comment>
<comment type="catalytic activity">
    <reaction evidence="1">
        <text>D-fructose 6-phosphate + L-glutamine = D-glucosamine 6-phosphate + L-glutamate</text>
        <dbReference type="Rhea" id="RHEA:13237"/>
        <dbReference type="ChEBI" id="CHEBI:29985"/>
        <dbReference type="ChEBI" id="CHEBI:58359"/>
        <dbReference type="ChEBI" id="CHEBI:58725"/>
        <dbReference type="ChEBI" id="CHEBI:61527"/>
        <dbReference type="EC" id="2.6.1.16"/>
    </reaction>
</comment>
<comment type="subunit">
    <text evidence="1">Homodimer.</text>
</comment>
<comment type="subcellular location">
    <subcellularLocation>
        <location evidence="1">Cytoplasm</location>
    </subcellularLocation>
</comment>
<comment type="sequence caution" evidence="2">
    <conflict type="erroneous initiation">
        <sequence resource="EMBL-CDS" id="BAA29315"/>
    </conflict>
</comment>
<feature type="initiator methionine" description="Removed" evidence="1">
    <location>
        <position position="1"/>
    </location>
</feature>
<feature type="chain" id="PRO_0000135431" description="Glutamine--fructose-6-phosphate aminotransferase [isomerizing]">
    <location>
        <begin position="2"/>
        <end position="598"/>
    </location>
</feature>
<feature type="domain" description="Glutamine amidotransferase type-2" evidence="1">
    <location>
        <begin position="2"/>
        <end position="219"/>
    </location>
</feature>
<feature type="domain" description="SIS 1" evidence="1">
    <location>
        <begin position="280"/>
        <end position="420"/>
    </location>
</feature>
<feature type="domain" description="SIS 2" evidence="1">
    <location>
        <begin position="449"/>
        <end position="588"/>
    </location>
</feature>
<feature type="active site" description="Nucleophile; for GATase activity" evidence="1">
    <location>
        <position position="2"/>
    </location>
</feature>
<feature type="active site" description="For Fru-6P isomerization activity" evidence="1">
    <location>
        <position position="593"/>
    </location>
</feature>
<gene>
    <name evidence="1" type="primary">glmS</name>
    <name type="ordered locus">PH0243</name>
</gene>
<evidence type="ECO:0000255" key="1">
    <source>
        <dbReference type="HAMAP-Rule" id="MF_00164"/>
    </source>
</evidence>
<evidence type="ECO:0000305" key="2"/>
<sequence>MCGIIGYIGPRKASDVIVEGLKRLEYRGYDSAGIATCYEGKIFIKKGAGKIDELVKKLNFLELPGNIGIGHTRWATHGIPNDTNAHPHTDCTGKIVVVHNGIIENFQELKRELLKRGHVFRSDTDTEVIAHLIEENLRITGNFEDAFRMSLLRLRGSYALVVLFADDPERLYIARKDSPLIIGIGKGEMFMASDIPAFLAYTRRAVFLDDGEYGIVSKDWFTIKDIITGAVKTKEIHEIQWTLEMAEKGGYEHFMLKEIFEQPKAIKDAIYGNVKEAPKVAELLMKYDRIIITGMGTSYHAALVGKYLIQRFGKVPVIVEEASELRYEYEDILDNRSLLIAITQSGETADTVAAMKLAKSKGVEVVGIVNVVGSLATRIADETLYTHAGPEIGVAATKTYTTQLVVLTLLAKELGKLVGIDVSQIEGTIPRLPELVDSSLKINDKIREIAVKLNDKRDFFYIGRGINYPTALEGALKIKEIAYVHAEGLSAGELKHGPLALIEDGIPVVGIAPTGKTFEKMLSNIEEAKARGGFIISLGDDVRLHQVSDIFIRLPKVPEELAPITYIVPLQLLAYHLAVLKGHNPDRPRNLAKSVTVE</sequence>
<proteinExistence type="inferred from homology"/>
<name>GLMS_PYRHO</name>
<organism>
    <name type="scientific">Pyrococcus horikoshii (strain ATCC 700860 / DSM 12428 / JCM 9974 / NBRC 100139 / OT-3)</name>
    <dbReference type="NCBI Taxonomy" id="70601"/>
    <lineage>
        <taxon>Archaea</taxon>
        <taxon>Methanobacteriati</taxon>
        <taxon>Methanobacteriota</taxon>
        <taxon>Thermococci</taxon>
        <taxon>Thermococcales</taxon>
        <taxon>Thermococcaceae</taxon>
        <taxon>Pyrococcus</taxon>
    </lineage>
</organism>
<dbReference type="EC" id="2.6.1.16" evidence="1"/>
<dbReference type="EMBL" id="BA000001">
    <property type="protein sequence ID" value="BAA29315.1"/>
    <property type="status" value="ALT_INIT"/>
    <property type="molecule type" value="Genomic_DNA"/>
</dbReference>
<dbReference type="PIR" id="D71248">
    <property type="entry name" value="D71248"/>
</dbReference>
<dbReference type="RefSeq" id="WP_048053067.1">
    <property type="nucleotide sequence ID" value="NC_000961.1"/>
</dbReference>
<dbReference type="SMR" id="O57981"/>
<dbReference type="STRING" id="70601.gene:9377159"/>
<dbReference type="EnsemblBacteria" id="BAA29315">
    <property type="protein sequence ID" value="BAA29315"/>
    <property type="gene ID" value="BAA29315"/>
</dbReference>
<dbReference type="GeneID" id="1444133"/>
<dbReference type="KEGG" id="pho:PH0243"/>
<dbReference type="eggNOG" id="arCOG00057">
    <property type="taxonomic scope" value="Archaea"/>
</dbReference>
<dbReference type="OrthoDB" id="372195at2157"/>
<dbReference type="Proteomes" id="UP000000752">
    <property type="component" value="Chromosome"/>
</dbReference>
<dbReference type="GO" id="GO:0005737">
    <property type="term" value="C:cytoplasm"/>
    <property type="evidence" value="ECO:0007669"/>
    <property type="project" value="UniProtKB-SubCell"/>
</dbReference>
<dbReference type="GO" id="GO:0097367">
    <property type="term" value="F:carbohydrate derivative binding"/>
    <property type="evidence" value="ECO:0007669"/>
    <property type="project" value="InterPro"/>
</dbReference>
<dbReference type="GO" id="GO:0004360">
    <property type="term" value="F:glutamine-fructose-6-phosphate transaminase (isomerizing) activity"/>
    <property type="evidence" value="ECO:0007669"/>
    <property type="project" value="UniProtKB-UniRule"/>
</dbReference>
<dbReference type="GO" id="GO:0005975">
    <property type="term" value="P:carbohydrate metabolic process"/>
    <property type="evidence" value="ECO:0007669"/>
    <property type="project" value="UniProtKB-UniRule"/>
</dbReference>
<dbReference type="GO" id="GO:0006002">
    <property type="term" value="P:fructose 6-phosphate metabolic process"/>
    <property type="evidence" value="ECO:0007669"/>
    <property type="project" value="TreeGrafter"/>
</dbReference>
<dbReference type="GO" id="GO:0006487">
    <property type="term" value="P:protein N-linked glycosylation"/>
    <property type="evidence" value="ECO:0007669"/>
    <property type="project" value="TreeGrafter"/>
</dbReference>
<dbReference type="GO" id="GO:0006047">
    <property type="term" value="P:UDP-N-acetylglucosamine metabolic process"/>
    <property type="evidence" value="ECO:0007669"/>
    <property type="project" value="TreeGrafter"/>
</dbReference>
<dbReference type="CDD" id="cd00714">
    <property type="entry name" value="GFAT"/>
    <property type="match status" value="1"/>
</dbReference>
<dbReference type="CDD" id="cd05008">
    <property type="entry name" value="SIS_GlmS_GlmD_1"/>
    <property type="match status" value="1"/>
</dbReference>
<dbReference type="CDD" id="cd05009">
    <property type="entry name" value="SIS_GlmS_GlmD_2"/>
    <property type="match status" value="1"/>
</dbReference>
<dbReference type="FunFam" id="3.40.50.10490:FF:000001">
    <property type="entry name" value="Glutamine--fructose-6-phosphate aminotransferase [isomerizing]"/>
    <property type="match status" value="1"/>
</dbReference>
<dbReference type="FunFam" id="3.60.20.10:FF:000006">
    <property type="entry name" value="Glutamine--fructose-6-phosphate aminotransferase [isomerizing]"/>
    <property type="match status" value="1"/>
</dbReference>
<dbReference type="Gene3D" id="3.40.50.10490">
    <property type="entry name" value="Glucose-6-phosphate isomerase like protein, domain 1"/>
    <property type="match status" value="2"/>
</dbReference>
<dbReference type="Gene3D" id="3.60.20.10">
    <property type="entry name" value="Glutamine Phosphoribosylpyrophosphate, subunit 1, domain 1"/>
    <property type="match status" value="1"/>
</dbReference>
<dbReference type="HAMAP" id="MF_00164">
    <property type="entry name" value="GlmS"/>
    <property type="match status" value="1"/>
</dbReference>
<dbReference type="InterPro" id="IPR017932">
    <property type="entry name" value="GATase_2_dom"/>
</dbReference>
<dbReference type="InterPro" id="IPR005855">
    <property type="entry name" value="GFAT"/>
</dbReference>
<dbReference type="InterPro" id="IPR047084">
    <property type="entry name" value="GFAT_N"/>
</dbReference>
<dbReference type="InterPro" id="IPR035466">
    <property type="entry name" value="GlmS/AgaS_SIS"/>
</dbReference>
<dbReference type="InterPro" id="IPR035490">
    <property type="entry name" value="GlmS/FrlB_SIS"/>
</dbReference>
<dbReference type="InterPro" id="IPR029055">
    <property type="entry name" value="Ntn_hydrolases_N"/>
</dbReference>
<dbReference type="InterPro" id="IPR001347">
    <property type="entry name" value="SIS_dom"/>
</dbReference>
<dbReference type="InterPro" id="IPR046348">
    <property type="entry name" value="SIS_dom_sf"/>
</dbReference>
<dbReference type="NCBIfam" id="TIGR01135">
    <property type="entry name" value="glmS"/>
    <property type="match status" value="1"/>
</dbReference>
<dbReference type="NCBIfam" id="NF001484">
    <property type="entry name" value="PRK00331.1"/>
    <property type="match status" value="1"/>
</dbReference>
<dbReference type="PANTHER" id="PTHR10937">
    <property type="entry name" value="GLUCOSAMINE--FRUCTOSE-6-PHOSPHATE AMINOTRANSFERASE, ISOMERIZING"/>
    <property type="match status" value="1"/>
</dbReference>
<dbReference type="PANTHER" id="PTHR10937:SF0">
    <property type="entry name" value="GLUTAMINE--FRUCTOSE-6-PHOSPHATE TRANSAMINASE (ISOMERIZING)"/>
    <property type="match status" value="1"/>
</dbReference>
<dbReference type="Pfam" id="PF13522">
    <property type="entry name" value="GATase_6"/>
    <property type="match status" value="1"/>
</dbReference>
<dbReference type="Pfam" id="PF01380">
    <property type="entry name" value="SIS"/>
    <property type="match status" value="2"/>
</dbReference>
<dbReference type="SUPFAM" id="SSF56235">
    <property type="entry name" value="N-terminal nucleophile aminohydrolases (Ntn hydrolases)"/>
    <property type="match status" value="1"/>
</dbReference>
<dbReference type="SUPFAM" id="SSF53697">
    <property type="entry name" value="SIS domain"/>
    <property type="match status" value="1"/>
</dbReference>
<dbReference type="PROSITE" id="PS51278">
    <property type="entry name" value="GATASE_TYPE_2"/>
    <property type="match status" value="1"/>
</dbReference>
<dbReference type="PROSITE" id="PS51464">
    <property type="entry name" value="SIS"/>
    <property type="match status" value="2"/>
</dbReference>
<keyword id="KW-0032">Aminotransferase</keyword>
<keyword id="KW-0963">Cytoplasm</keyword>
<keyword id="KW-0315">Glutamine amidotransferase</keyword>
<keyword id="KW-0677">Repeat</keyword>
<keyword id="KW-0808">Transferase</keyword>
<accession>O57981</accession>
<protein>
    <recommendedName>
        <fullName evidence="1">Glutamine--fructose-6-phosphate aminotransferase [isomerizing]</fullName>
        <ecNumber evidence="1">2.6.1.16</ecNumber>
    </recommendedName>
    <alternativeName>
        <fullName evidence="1">D-fructose-6-phosphate amidotransferase</fullName>
    </alternativeName>
    <alternativeName>
        <fullName evidence="1">GFAT</fullName>
    </alternativeName>
    <alternativeName>
        <fullName evidence="1">Glucosamine-6-phosphate synthase</fullName>
    </alternativeName>
    <alternativeName>
        <fullName evidence="1">Hexosephosphate aminotransferase</fullName>
    </alternativeName>
    <alternativeName>
        <fullName evidence="1">L-glutamine--D-fructose-6-phosphate amidotransferase</fullName>
    </alternativeName>
</protein>
<reference key="1">
    <citation type="journal article" date="1998" name="DNA Res.">
        <title>Complete sequence and gene organization of the genome of a hyper-thermophilic archaebacterium, Pyrococcus horikoshii OT3.</title>
        <authorList>
            <person name="Kawarabayasi Y."/>
            <person name="Sawada M."/>
            <person name="Horikawa H."/>
            <person name="Haikawa Y."/>
            <person name="Hino Y."/>
            <person name="Yamamoto S."/>
            <person name="Sekine M."/>
            <person name="Baba S."/>
            <person name="Kosugi H."/>
            <person name="Hosoyama A."/>
            <person name="Nagai Y."/>
            <person name="Sakai M."/>
            <person name="Ogura K."/>
            <person name="Otsuka R."/>
            <person name="Nakazawa H."/>
            <person name="Takamiya M."/>
            <person name="Ohfuku Y."/>
            <person name="Funahashi T."/>
            <person name="Tanaka T."/>
            <person name="Kudoh Y."/>
            <person name="Yamazaki J."/>
            <person name="Kushida N."/>
            <person name="Oguchi A."/>
            <person name="Aoki K."/>
            <person name="Yoshizawa T."/>
            <person name="Nakamura Y."/>
            <person name="Robb F.T."/>
            <person name="Horikoshi K."/>
            <person name="Masuchi Y."/>
            <person name="Shizuya H."/>
            <person name="Kikuchi H."/>
        </authorList>
    </citation>
    <scope>NUCLEOTIDE SEQUENCE [LARGE SCALE GENOMIC DNA]</scope>
    <source>
        <strain>ATCC 700860 / DSM 12428 / JCM 9974 / NBRC 100139 / OT-3</strain>
    </source>
</reference>